<comment type="function">
    <text evidence="1">Rhomboid-type serine protease that catalyzes intramembrane proteolysis.</text>
</comment>
<comment type="catalytic activity">
    <reaction evidence="1">
        <text>Cleaves type-1 transmembrane domains using a catalytic dyad composed of serine and histidine that are contributed by different transmembrane domains.</text>
        <dbReference type="EC" id="3.4.21.105"/>
    </reaction>
</comment>
<comment type="subcellular location">
    <subcellularLocation>
        <location evidence="1">Cell inner membrane</location>
        <topology evidence="1">Multi-pass membrane protein</topology>
    </subcellularLocation>
</comment>
<comment type="similarity">
    <text evidence="1">Belongs to the peptidase S54 family.</text>
</comment>
<proteinExistence type="inferred from homology"/>
<keyword id="KW-0997">Cell inner membrane</keyword>
<keyword id="KW-1003">Cell membrane</keyword>
<keyword id="KW-0378">Hydrolase</keyword>
<keyword id="KW-0472">Membrane</keyword>
<keyword id="KW-0645">Protease</keyword>
<keyword id="KW-0720">Serine protease</keyword>
<keyword id="KW-0812">Transmembrane</keyword>
<keyword id="KW-1133">Transmembrane helix</keyword>
<accession>B5YTX6</accession>
<reference key="1">
    <citation type="journal article" date="2011" name="Proc. Natl. Acad. Sci. U.S.A.">
        <title>Genomic anatomy of Escherichia coli O157:H7 outbreaks.</title>
        <authorList>
            <person name="Eppinger M."/>
            <person name="Mammel M.K."/>
            <person name="Leclerc J.E."/>
            <person name="Ravel J."/>
            <person name="Cebula T.A."/>
        </authorList>
    </citation>
    <scope>NUCLEOTIDE SEQUENCE [LARGE SCALE GENOMIC DNA]</scope>
    <source>
        <strain>EC4115 / EHEC</strain>
    </source>
</reference>
<organism>
    <name type="scientific">Escherichia coli O157:H7 (strain EC4115 / EHEC)</name>
    <dbReference type="NCBI Taxonomy" id="444450"/>
    <lineage>
        <taxon>Bacteria</taxon>
        <taxon>Pseudomonadati</taxon>
        <taxon>Pseudomonadota</taxon>
        <taxon>Gammaproteobacteria</taxon>
        <taxon>Enterobacterales</taxon>
        <taxon>Enterobacteriaceae</taxon>
        <taxon>Escherichia</taxon>
    </lineage>
</organism>
<feature type="chain" id="PRO_1000147853" description="Rhomboid protease GlpG">
    <location>
        <begin position="1"/>
        <end position="276"/>
    </location>
</feature>
<feature type="transmembrane region" description="Helical" evidence="1">
    <location>
        <begin position="94"/>
        <end position="114"/>
    </location>
</feature>
<feature type="transmembrane region" description="Helical" evidence="1">
    <location>
        <begin position="142"/>
        <end position="162"/>
    </location>
</feature>
<feature type="transmembrane region" description="Helical" evidence="1">
    <location>
        <begin position="169"/>
        <end position="189"/>
    </location>
</feature>
<feature type="transmembrane region" description="Helical" evidence="1">
    <location>
        <begin position="192"/>
        <end position="212"/>
    </location>
</feature>
<feature type="transmembrane region" description="Helical" evidence="1">
    <location>
        <begin position="229"/>
        <end position="249"/>
    </location>
</feature>
<feature type="transmembrane region" description="Helical" evidence="1">
    <location>
        <begin position="250"/>
        <end position="270"/>
    </location>
</feature>
<feature type="active site" description="Nucleophile" evidence="1">
    <location>
        <position position="201"/>
    </location>
</feature>
<feature type="active site" evidence="1">
    <location>
        <position position="254"/>
    </location>
</feature>
<evidence type="ECO:0000255" key="1">
    <source>
        <dbReference type="HAMAP-Rule" id="MF_01594"/>
    </source>
</evidence>
<protein>
    <recommendedName>
        <fullName evidence="1">Rhomboid protease GlpG</fullName>
        <ecNumber evidence="1">3.4.21.105</ecNumber>
    </recommendedName>
    <alternativeName>
        <fullName evidence="1">Intramembrane serine protease</fullName>
    </alternativeName>
</protein>
<dbReference type="EC" id="3.4.21.105" evidence="1"/>
<dbReference type="EMBL" id="CP001164">
    <property type="protein sequence ID" value="ACI36519.1"/>
    <property type="molecule type" value="Genomic_DNA"/>
</dbReference>
<dbReference type="RefSeq" id="WP_000928722.1">
    <property type="nucleotide sequence ID" value="NC_011353.1"/>
</dbReference>
<dbReference type="SMR" id="B5YTX6"/>
<dbReference type="MEROPS" id="S54.016"/>
<dbReference type="GeneID" id="93778572"/>
<dbReference type="KEGG" id="ecf:ECH74115_4732"/>
<dbReference type="HOGENOM" id="CLU_058989_0_0_6"/>
<dbReference type="GO" id="GO:0005886">
    <property type="term" value="C:plasma membrane"/>
    <property type="evidence" value="ECO:0007669"/>
    <property type="project" value="UniProtKB-SubCell"/>
</dbReference>
<dbReference type="GO" id="GO:0004252">
    <property type="term" value="F:serine-type endopeptidase activity"/>
    <property type="evidence" value="ECO:0007669"/>
    <property type="project" value="UniProtKB-UniRule"/>
</dbReference>
<dbReference type="GO" id="GO:0006508">
    <property type="term" value="P:proteolysis"/>
    <property type="evidence" value="ECO:0007669"/>
    <property type="project" value="UniProtKB-UniRule"/>
</dbReference>
<dbReference type="FunFam" id="1.20.1540.10:FF:000003">
    <property type="entry name" value="Rhomboid protease GlpG"/>
    <property type="match status" value="1"/>
</dbReference>
<dbReference type="FunFam" id="3.30.70.2350:FF:000001">
    <property type="entry name" value="Rhomboid protease GlpG"/>
    <property type="match status" value="1"/>
</dbReference>
<dbReference type="Gene3D" id="3.30.70.2350">
    <property type="match status" value="1"/>
</dbReference>
<dbReference type="Gene3D" id="1.20.1540.10">
    <property type="entry name" value="Rhomboid-like"/>
    <property type="match status" value="1"/>
</dbReference>
<dbReference type="HAMAP" id="MF_01594">
    <property type="entry name" value="Rhomboid_GlpG"/>
    <property type="match status" value="1"/>
</dbReference>
<dbReference type="InterPro" id="IPR038236">
    <property type="entry name" value="GlpG_N_sf"/>
</dbReference>
<dbReference type="InterPro" id="IPR022732">
    <property type="entry name" value="Peptidase_S54_GlpG_N"/>
</dbReference>
<dbReference type="InterPro" id="IPR022764">
    <property type="entry name" value="Peptidase_S54_rhomboid_dom"/>
</dbReference>
<dbReference type="InterPro" id="IPR035952">
    <property type="entry name" value="Rhomboid-like_sf"/>
</dbReference>
<dbReference type="InterPro" id="IPR023662">
    <property type="entry name" value="Rhomboid_protease_GlpG"/>
</dbReference>
<dbReference type="NCBIfam" id="NF008155">
    <property type="entry name" value="PRK10907.1"/>
    <property type="match status" value="1"/>
</dbReference>
<dbReference type="NCBIfam" id="TIGR04239">
    <property type="entry name" value="rhombo_GlpG"/>
    <property type="match status" value="1"/>
</dbReference>
<dbReference type="PANTHER" id="PTHR43066:SF26">
    <property type="entry name" value="RHOMBOID PROTEASE GLPG"/>
    <property type="match status" value="1"/>
</dbReference>
<dbReference type="PANTHER" id="PTHR43066">
    <property type="entry name" value="RHOMBOID-RELATED PROTEIN"/>
    <property type="match status" value="1"/>
</dbReference>
<dbReference type="Pfam" id="PF01694">
    <property type="entry name" value="Rhomboid"/>
    <property type="match status" value="1"/>
</dbReference>
<dbReference type="Pfam" id="PF12122">
    <property type="entry name" value="Rhomboid_N"/>
    <property type="match status" value="1"/>
</dbReference>
<dbReference type="SUPFAM" id="SSF144091">
    <property type="entry name" value="Rhomboid-like"/>
    <property type="match status" value="1"/>
</dbReference>
<gene>
    <name evidence="1" type="primary">glpG</name>
    <name type="ordered locus">ECH74115_4732</name>
</gene>
<name>GLPG_ECO5E</name>
<sequence>MLMITSFANPRVAQAFVDYMATQGVILTIQQHNQSDVWLADESQAERVRAELARFLENPADPRYLAASWQAGHTGSGLHYRRYPFFAALRERAGPVTWVMMIACVVVFIAMQILGDQEVMLWLAWPFDPALKFEFWRYFTHALMHFSLMHILFNLLWWWYLGGAVEKRLGSGKLIVITLISALLSGYVQQKFSGPWFGGLSGVVYALMGYVWLRGERDPQSGIYLQRGLIIFALIWIVAGWFDLFGMSMANGAHIAGLAVGLAMAFVDSLNARKRK</sequence>